<comment type="function">
    <text evidence="1">The branched-chain alpha-keto dehydrogenase complex catalyzes the overall conversion of alpha-keto acids to acyl-CoA and CO(2). It contains multiple copies of three enzymatic components: branched-chain alpha-keto acid decarboxylase (E1), lipoamide acyltransferase (E2) and lipoamide dehydrogenase (E3).</text>
</comment>
<comment type="catalytic activity">
    <reaction evidence="1">
        <text>N(6)-[(R)-lipoyl]-L-lysyl-[protein] + 3-methyl-2-oxobutanoate + H(+) = N(6)-[(R)-S(8)-2-methylpropanoyldihydrolipoyl]-L-lysyl-[protein] + CO2</text>
        <dbReference type="Rhea" id="RHEA:13457"/>
        <dbReference type="Rhea" id="RHEA-COMP:10474"/>
        <dbReference type="Rhea" id="RHEA-COMP:10497"/>
        <dbReference type="ChEBI" id="CHEBI:11851"/>
        <dbReference type="ChEBI" id="CHEBI:15378"/>
        <dbReference type="ChEBI" id="CHEBI:16526"/>
        <dbReference type="ChEBI" id="CHEBI:83099"/>
        <dbReference type="ChEBI" id="CHEBI:83142"/>
        <dbReference type="EC" id="1.2.4.4"/>
    </reaction>
    <physiologicalReaction direction="left-to-right" evidence="1">
        <dbReference type="Rhea" id="RHEA:13458"/>
    </physiologicalReaction>
</comment>
<comment type="cofactor">
    <cofactor evidence="1">
        <name>thiamine diphosphate</name>
        <dbReference type="ChEBI" id="CHEBI:58937"/>
    </cofactor>
</comment>
<comment type="subunit">
    <text evidence="1">Heterotetramer of 2 alpha and 2 beta chains.</text>
</comment>
<comment type="subcellular location">
    <subcellularLocation>
        <location evidence="1">Mitochondrion matrix</location>
    </subcellularLocation>
</comment>
<comment type="sequence caution" evidence="3">
    <conflict type="erroneous gene model prediction">
        <sequence resource="EMBL-CDS" id="EGS19664"/>
    </conflict>
    <text>The predicted gene CTHT_0041430 has been split into 2 genes: CTHT_0041430-1 and CTHT_0041430-2.</text>
</comment>
<gene>
    <name type="ORF">CTHT_0041430</name>
    <name type="ORF">CTHT_0041430-1</name>
</gene>
<name>ODBB_CHATD</name>
<keyword id="KW-0479">Metal-binding</keyword>
<keyword id="KW-0496">Mitochondrion</keyword>
<keyword id="KW-0560">Oxidoreductase</keyword>
<keyword id="KW-0630">Potassium</keyword>
<keyword id="KW-1185">Reference proteome</keyword>
<keyword id="KW-0809">Transit peptide</keyword>
<reference key="1">
    <citation type="journal article" date="2011" name="Cell">
        <title>Insight into structure and assembly of the nuclear pore complex by utilizing the genome of a eukaryotic thermophile.</title>
        <authorList>
            <person name="Amlacher S."/>
            <person name="Sarges P."/>
            <person name="Flemming D."/>
            <person name="van Noort V."/>
            <person name="Kunze R."/>
            <person name="Devos D.P."/>
            <person name="Arumugam M."/>
            <person name="Bork P."/>
            <person name="Hurt E."/>
        </authorList>
    </citation>
    <scope>NUCLEOTIDE SEQUENCE [LARGE SCALE GENOMIC DNA]</scope>
    <source>
        <strain>DSM 1495 / CBS 144.50 / IMI 039719</strain>
    </source>
</reference>
<organism>
    <name type="scientific">Chaetomium thermophilum (strain DSM 1495 / CBS 144.50 / IMI 039719)</name>
    <name type="common">Thermochaetoides thermophila</name>
    <dbReference type="NCBI Taxonomy" id="759272"/>
    <lineage>
        <taxon>Eukaryota</taxon>
        <taxon>Fungi</taxon>
        <taxon>Dikarya</taxon>
        <taxon>Ascomycota</taxon>
        <taxon>Pezizomycotina</taxon>
        <taxon>Sordariomycetes</taxon>
        <taxon>Sordariomycetidae</taxon>
        <taxon>Sordariales</taxon>
        <taxon>Chaetomiaceae</taxon>
        <taxon>Thermochaetoides</taxon>
    </lineage>
</organism>
<feature type="transit peptide" description="Mitochondrion" evidence="2">
    <location>
        <begin position="1"/>
        <end position="40"/>
    </location>
</feature>
<feature type="chain" id="PRO_0000450358" description="2-oxoisovalerate dehydrogenase subunit beta, mitochondrial" evidence="2">
    <location>
        <begin position="41"/>
        <end position="469"/>
    </location>
</feature>
<feature type="binding site" evidence="1">
    <location>
        <position position="167"/>
    </location>
    <ligand>
        <name>thiamine diphosphate</name>
        <dbReference type="ChEBI" id="CHEBI:58937"/>
        <note>ligand shared with alpha subunit</note>
    </ligand>
</feature>
<feature type="binding site" evidence="1">
    <location>
        <position position="194"/>
    </location>
    <ligand>
        <name>K(+)</name>
        <dbReference type="ChEBI" id="CHEBI:29103"/>
        <note>structural</note>
    </ligand>
</feature>
<feature type="binding site" evidence="1">
    <location>
        <position position="196"/>
    </location>
    <ligand>
        <name>K(+)</name>
        <dbReference type="ChEBI" id="CHEBI:29103"/>
        <note>structural</note>
    </ligand>
</feature>
<feature type="binding site" evidence="1">
    <location>
        <position position="197"/>
    </location>
    <ligand>
        <name>K(+)</name>
        <dbReference type="ChEBI" id="CHEBI:29103"/>
        <note>structural</note>
    </ligand>
</feature>
<sequence length="469" mass="50998">MKRSTVVIRPSARALSRQASSQSFLLARSSALTSRQRRLYSTHPPNARLNLPIDYATTPLLAHTSQAALSNPELPASVRNGTTKRMNLFQAINDALSTALAEDESVLIFGEDVAFGGVFRCTTKLAETYGGDRVFNTPLTEQGIMGFAIGAAAEGMRPVAEIQFADYVFPAFDQLVNEAAKFRYRDGAGGRSAGGLTVRMPCGGVGHGALYHSQSPEALFTHIPGLKVIIPRGPVQAKGLLLAAIRSNDPCVVMEPKILYRAAVEQVPTTAYELPLGKAEILKEGKDVTVVSYGQPLYKCMAALKAAEQDFGVSVELIDLRTIYPWDKETVFNSVRKTGRCVVVHEAMVNAGVGAEVAAAIQEDPETFVRLEAPVARIAGWSIPTPLVFEQFNLPDVTSKCYLTLGLADVYADGMPRDIRRHQKGDEFLRDLSMNSGILKQSMLHSSRRGVDWLMGIVLDDIILSVFLV</sequence>
<protein>
    <recommendedName>
        <fullName evidence="1">2-oxoisovalerate dehydrogenase subunit beta, mitochondrial</fullName>
        <ecNumber evidence="1">1.2.4.4</ecNumber>
    </recommendedName>
</protein>
<dbReference type="EC" id="1.2.4.4" evidence="1"/>
<dbReference type="EMBL" id="GL988043">
    <property type="protein sequence ID" value="EGS19664.1"/>
    <property type="status" value="ALT_SEQ"/>
    <property type="molecule type" value="Genomic_DNA"/>
</dbReference>
<dbReference type="RefSeq" id="XP_006694549.1">
    <property type="nucleotide sequence ID" value="XM_006694486.1"/>
</dbReference>
<dbReference type="SMR" id="P9WF02"/>
<dbReference type="GeneID" id="18258181"/>
<dbReference type="KEGG" id="cthr:CTHT_0041430"/>
<dbReference type="OrthoDB" id="878at2759"/>
<dbReference type="Proteomes" id="UP000008066">
    <property type="component" value="Unassembled WGS sequence"/>
</dbReference>
<dbReference type="GO" id="GO:0005759">
    <property type="term" value="C:mitochondrial matrix"/>
    <property type="evidence" value="ECO:0007669"/>
    <property type="project" value="UniProtKB-SubCell"/>
</dbReference>
<dbReference type="GO" id="GO:0003863">
    <property type="term" value="F:3-methyl-2-oxobutanoate dehydrogenase (2-methylpropanoyl-transferring) activity"/>
    <property type="evidence" value="ECO:0007669"/>
    <property type="project" value="UniProtKB-EC"/>
</dbReference>
<dbReference type="GO" id="GO:0046872">
    <property type="term" value="F:metal ion binding"/>
    <property type="evidence" value="ECO:0007669"/>
    <property type="project" value="UniProtKB-KW"/>
</dbReference>
<dbReference type="GO" id="GO:0009083">
    <property type="term" value="P:branched-chain amino acid catabolic process"/>
    <property type="evidence" value="ECO:0007669"/>
    <property type="project" value="TreeGrafter"/>
</dbReference>
<dbReference type="GO" id="GO:0007584">
    <property type="term" value="P:response to nutrient"/>
    <property type="evidence" value="ECO:0007669"/>
    <property type="project" value="TreeGrafter"/>
</dbReference>
<dbReference type="CDD" id="cd07036">
    <property type="entry name" value="TPP_PYR_E1-PDHc-beta_like"/>
    <property type="match status" value="1"/>
</dbReference>
<dbReference type="FunFam" id="3.40.50.920:FF:000001">
    <property type="entry name" value="Pyruvate dehydrogenase E1 beta subunit"/>
    <property type="match status" value="1"/>
</dbReference>
<dbReference type="FunFam" id="3.40.50.970:FF:000001">
    <property type="entry name" value="Pyruvate dehydrogenase E1 beta subunit"/>
    <property type="match status" value="1"/>
</dbReference>
<dbReference type="Gene3D" id="3.40.50.920">
    <property type="match status" value="1"/>
</dbReference>
<dbReference type="Gene3D" id="3.40.50.970">
    <property type="match status" value="1"/>
</dbReference>
<dbReference type="InterPro" id="IPR029061">
    <property type="entry name" value="THDP-binding"/>
</dbReference>
<dbReference type="InterPro" id="IPR009014">
    <property type="entry name" value="Transketo_C/PFOR_II"/>
</dbReference>
<dbReference type="InterPro" id="IPR005475">
    <property type="entry name" value="Transketolase-like_Pyr-bd"/>
</dbReference>
<dbReference type="InterPro" id="IPR033248">
    <property type="entry name" value="Transketolase_C"/>
</dbReference>
<dbReference type="PANTHER" id="PTHR42980:SF1">
    <property type="entry name" value="2-OXOISOVALERATE DEHYDROGENASE SUBUNIT BETA, MITOCHONDRIAL"/>
    <property type="match status" value="1"/>
</dbReference>
<dbReference type="PANTHER" id="PTHR42980">
    <property type="entry name" value="2-OXOISOVALERATE DEHYDROGENASE SUBUNIT BETA-RELATED"/>
    <property type="match status" value="1"/>
</dbReference>
<dbReference type="Pfam" id="PF02779">
    <property type="entry name" value="Transket_pyr"/>
    <property type="match status" value="1"/>
</dbReference>
<dbReference type="Pfam" id="PF02780">
    <property type="entry name" value="Transketolase_C"/>
    <property type="match status" value="1"/>
</dbReference>
<dbReference type="SMART" id="SM00861">
    <property type="entry name" value="Transket_pyr"/>
    <property type="match status" value="1"/>
</dbReference>
<dbReference type="SUPFAM" id="SSF52518">
    <property type="entry name" value="Thiamin diphosphate-binding fold (THDP-binding)"/>
    <property type="match status" value="1"/>
</dbReference>
<dbReference type="SUPFAM" id="SSF52922">
    <property type="entry name" value="TK C-terminal domain-like"/>
    <property type="match status" value="1"/>
</dbReference>
<dbReference type="PROSITE" id="PS00748">
    <property type="entry name" value="F_ACTIN_CAPPING_A_1"/>
    <property type="match status" value="1"/>
</dbReference>
<dbReference type="PROSITE" id="PS00749">
    <property type="entry name" value="F_ACTIN_CAPPING_A_2"/>
    <property type="match status" value="1"/>
</dbReference>
<accession>P9WF02</accession>
<accession>G0SA92</accession>
<proteinExistence type="inferred from homology"/>
<evidence type="ECO:0000250" key="1">
    <source>
        <dbReference type="UniProtKB" id="P21953"/>
    </source>
</evidence>
<evidence type="ECO:0000255" key="2"/>
<evidence type="ECO:0000305" key="3"/>